<gene>
    <name evidence="8" type="primary">PMIV</name>
    <name evidence="15" type="ORF">PFHG_00463</name>
</gene>
<evidence type="ECO:0000250" key="1">
    <source>
        <dbReference type="UniProtKB" id="Q8IM16"/>
    </source>
</evidence>
<evidence type="ECO:0000255" key="2"/>
<evidence type="ECO:0000255" key="3">
    <source>
        <dbReference type="PROSITE-ProRule" id="PRU01103"/>
    </source>
</evidence>
<evidence type="ECO:0000255" key="4">
    <source>
        <dbReference type="RuleBase" id="RU000454"/>
    </source>
</evidence>
<evidence type="ECO:0000269" key="5">
    <source>
    </source>
</evidence>
<evidence type="ECO:0000269" key="6">
    <source>
    </source>
</evidence>
<evidence type="ECO:0000269" key="7">
    <source>
    </source>
</evidence>
<evidence type="ECO:0000303" key="8">
    <source>
    </source>
</evidence>
<evidence type="ECO:0000303" key="9">
    <source>
    </source>
</evidence>
<evidence type="ECO:0000305" key="10"/>
<evidence type="ECO:0000305" key="11">
    <source>
    </source>
</evidence>
<evidence type="ECO:0000305" key="12">
    <source>
    </source>
</evidence>
<evidence type="ECO:0000312" key="13">
    <source>
        <dbReference type="EMBL" id="AAW71461.1"/>
    </source>
</evidence>
<evidence type="ECO:0000312" key="14">
    <source>
        <dbReference type="EMBL" id="AAW71462.1"/>
    </source>
</evidence>
<evidence type="ECO:0000312" key="15">
    <source>
        <dbReference type="EMBL" id="KOB58715.1"/>
    </source>
</evidence>
<evidence type="ECO:0000312" key="16">
    <source>
        <dbReference type="Proteomes" id="UP000054289"/>
    </source>
</evidence>
<reference evidence="14" key="1">
    <citation type="journal article" date="2006" name="Gene">
        <title>Variable SNP density in aspartyl-protease genes of the malaria parasite Plasmodium falciparum.</title>
        <authorList>
            <person name="Barry A.E."/>
            <person name="Leliwa-Sytek A."/>
            <person name="Man K."/>
            <person name="Kasper J.M."/>
            <person name="Hartl D.L."/>
            <person name="Day K.P."/>
        </authorList>
    </citation>
    <scope>NUCLEOTIDE SEQUENCE [GENOMIC DNA] OF 1-448</scope>
    <source>
        <strain evidence="14">D6</strain>
        <strain evidence="13">HB3</strain>
    </source>
</reference>
<reference evidence="16" key="2">
    <citation type="submission" date="2006-03" db="EMBL/GenBank/DDBJ databases">
        <title>Annotation of Plasmodium falciparum HB3.</title>
        <authorList>
            <consortium name="The Broad Institute Genome Sequencing Platform"/>
            <person name="Volkman S.K."/>
            <person name="Neafsey D.E."/>
            <person name="Dash A.P."/>
            <person name="Chitnis C.E."/>
            <person name="Hartl D.L."/>
            <person name="Young S.K."/>
            <person name="Zeng Q."/>
            <person name="Koehrsen M."/>
            <person name="Alvarado L."/>
            <person name="Berlin A."/>
            <person name="Borenstein D."/>
            <person name="Chapman S.B."/>
            <person name="Chen Z."/>
            <person name="Engels R."/>
            <person name="Freedman E."/>
            <person name="Gellesch M."/>
            <person name="Goldberg J."/>
            <person name="Griggs A."/>
            <person name="Gujja S."/>
            <person name="Heilman E.R."/>
            <person name="Heiman D.I."/>
            <person name="Howarth C."/>
            <person name="Jen D."/>
            <person name="Larson L."/>
            <person name="Mehta T."/>
            <person name="Neiman D."/>
            <person name="Park D."/>
            <person name="Pearson M."/>
            <person name="Roberts A."/>
            <person name="Saif S."/>
            <person name="Shea T."/>
            <person name="Shenoy N."/>
            <person name="Sisk P."/>
            <person name="Stolte C."/>
            <person name="Sykes S."/>
            <person name="Walk T."/>
            <person name="White J."/>
            <person name="Yandava C."/>
            <person name="Haas B."/>
            <person name="Henn M.R."/>
            <person name="Nusbaum C."/>
            <person name="Birren B."/>
        </authorList>
    </citation>
    <scope>NUCLEOTIDE SEQUENCE [LARGE SCALE GENOMIC DNA]</scope>
    <source>
        <strain evidence="16">HB3</strain>
    </source>
</reference>
<reference evidence="10" key="3">
    <citation type="journal article" date="2002" name="Proc. Natl. Acad. Sci. U.S.A.">
        <title>Four plasmepsins are active in the Plasmodium falciparum food vacuole, including a protease with an active-site histidine.</title>
        <authorList>
            <person name="Banerjee R."/>
            <person name="Liu J."/>
            <person name="Beatty W."/>
            <person name="Pelosof L."/>
            <person name="Klemba M."/>
            <person name="Goldberg D.E."/>
        </authorList>
    </citation>
    <scope>FUNCTION</scope>
    <scope>CATALYTIC ACTIVITY</scope>
    <scope>ACTIVITY REGULATION</scope>
    <scope>BIOPHYSICOCHEMICAL PROPERTIES</scope>
    <scope>SUBCELLULAR LOCATION</scope>
    <scope>DEVELOPMENTAL STAGE</scope>
    <scope>PROTEOLYTIC CLEAVAGE</scope>
</reference>
<reference evidence="10" key="4">
    <citation type="journal article" date="2003" name="Mol. Biochem. Parasitol.">
        <title>Food vacuole plasmepsins are processed at a conserved site by an acidic convertase activity in Plasmodium falciparum.</title>
        <authorList>
            <person name="Banerjee R."/>
            <person name="Francis S.E."/>
            <person name="Goldberg D.E."/>
        </authorList>
    </citation>
    <scope>SUBCELLULAR LOCATION</scope>
    <scope>DEVELOPMENTAL STAGE</scope>
    <scope>PROTEOLYTIC CLEAVAGE</scope>
</reference>
<reference evidence="10" key="5">
    <citation type="journal article" date="2006" name="J. Biochem.">
        <title>Prodomain processing of recombinant plasmepsin II and IV, the aspartic proteases of Plasmodium falciparum, is auto- and trans-catalytic.</title>
        <authorList>
            <person name="Kim Y.M."/>
            <person name="Lee M.H."/>
            <person name="Piao T.G."/>
            <person name="Lee J.W."/>
            <person name="Kim J.H."/>
            <person name="Lee S."/>
            <person name="Choi K.M."/>
            <person name="Jiang J.H."/>
            <person name="Kim T.U."/>
            <person name="Park H."/>
        </authorList>
    </citation>
    <scope>FUNCTION</scope>
    <scope>CATALYTIC ACTIVITY</scope>
    <scope>ACTIVITY REGULATION</scope>
    <scope>PROTEOLYTIC CLEAVAGE</scope>
    <scope>MUTAGENESIS OF ASP-155 AND ASP-335</scope>
</reference>
<feature type="propeptide" id="PRO_0000453384" evidence="12">
    <location>
        <begin position="1"/>
        <end position="121"/>
    </location>
</feature>
<feature type="chain" id="PRO_0000453385" description="Plasmepsin IV">
    <location>
        <begin position="122"/>
        <end position="449"/>
    </location>
</feature>
<feature type="topological domain" description="Cytoplasmic" evidence="10">
    <location>
        <begin position="1"/>
        <end position="37"/>
    </location>
</feature>
<feature type="transmembrane region" description="Helical; Signal-anchor for type II membrane protein" evidence="2">
    <location>
        <begin position="38"/>
        <end position="58"/>
    </location>
</feature>
<feature type="topological domain" description="Lumenal" evidence="10">
    <location>
        <begin position="59"/>
        <end position="449"/>
    </location>
</feature>
<feature type="domain" description="Peptidase A1" evidence="3">
    <location>
        <begin position="137"/>
        <end position="444"/>
    </location>
</feature>
<feature type="active site" evidence="3">
    <location>
        <position position="155"/>
    </location>
</feature>
<feature type="active site" evidence="3">
    <location>
        <position position="335"/>
    </location>
</feature>
<feature type="disulfide bond" evidence="1">
    <location>
        <begin position="168"/>
        <end position="173"/>
    </location>
</feature>
<feature type="disulfide bond" evidence="1">
    <location>
        <begin position="370"/>
        <end position="406"/>
    </location>
</feature>
<feature type="mutagenesis site" description="Loss of catalytic activity." evidence="7">
    <original>D</original>
    <variation>A</variation>
    <location>
        <position position="155"/>
    </location>
</feature>
<feature type="mutagenesis site" description="Loss of catalytic activity." evidence="7">
    <original>D</original>
    <variation>A</variation>
    <location>
        <position position="335"/>
    </location>
</feature>
<comment type="function">
    <text evidence="5 7 10">During the asexual blood stage, catalyzes the cleavage of denatured host hemoglobin (Hb) or globins (PubMed:11782538, PubMed:16452306). Digestion of host Hb is an essential step which provides the parasite with amino acids for protein synthesis, and regulates osmolarity (Probable).</text>
</comment>
<comment type="catalytic activity">
    <reaction evidence="5 7">
        <text>Hydrolysis of the bonds linking certain hydrophobic residues in hemoglobin or globin. Also cleaves small molecules substrates such as Ala-Leu-Glu-Arg-Thr-Phe-|-Phe(NO2)-Ser-Phe-Pro-Thr.</text>
        <dbReference type="EC" id="3.4.23.39"/>
    </reaction>
</comment>
<comment type="activity regulation">
    <text evidence="5 7">Inhibited by pepstatin A.</text>
</comment>
<comment type="biophysicochemical properties">
    <phDependence>
        <text evidence="5">Optimum pH is 5.4.</text>
    </phDependence>
</comment>
<comment type="subunit">
    <text evidence="1">Component of the hemozoin formation complex (HFC) composed of falcipains FP2A and/or FP2B, plasmepsins PMII, PMIII/HAP and PMIV, heme detoxifying protein HDP and falcilysin FLN. The HFC complex is involved in hemoglobin degradation and detoxification of heme in the food vacuole during the asexual blood stage.</text>
</comment>
<comment type="subcellular location">
    <subcellularLocation>
        <location evidence="2">Membrane</location>
        <topology evidence="10">Single-pass type II membrane protein</topology>
    </subcellularLocation>
    <subcellularLocation>
        <location evidence="5 6">Vacuole lumen</location>
    </subcellularLocation>
    <text evidence="5 6">In trophozoites, localizes to the digestive (or food) vacuole, an acidic vacuole where host hemoglobin is digested.</text>
</comment>
<comment type="developmental stage">
    <text evidence="5 6">Expressed during the asexual blood stage; expression begins in mid to late trophozoites and continues in schizonts (at protein level).</text>
</comment>
<comment type="PTM">
    <text evidence="7 11 12">Proteolytically cleaved into the soluble active mature form by cysteine proteases in the digestive vacuole of trophozoites (Probable). Proteolysis requires an acidic environment (Probable) (PubMed:16452306). Autoprocessing or transprocessing by other plasmepsins such as PMII may serve as an alternate activation system (PubMed:16452306).</text>
</comment>
<comment type="similarity">
    <text evidence="4">Belongs to the peptidase A1 family.</text>
</comment>
<comment type="caution">
    <text evidence="10">It is unclear if PMIV is glycosylated as other members of the same enzyme family, ie. PMI and PMII, are not.</text>
</comment>
<comment type="sequence caution" evidence="10">
    <conflict type="erroneous gene model prediction">
        <sequence resource="EMBL-CDS" id="KOB58715"/>
    </conflict>
</comment>
<accession>Q17SB3</accession>
<accession>A0A0L7K6M7</accession>
<organism evidence="16">
    <name type="scientific">Plasmodium falciparum (isolate HB3)</name>
    <dbReference type="NCBI Taxonomy" id="137071"/>
    <lineage>
        <taxon>Eukaryota</taxon>
        <taxon>Sar</taxon>
        <taxon>Alveolata</taxon>
        <taxon>Apicomplexa</taxon>
        <taxon>Aconoidasida</taxon>
        <taxon>Haemosporida</taxon>
        <taxon>Plasmodiidae</taxon>
        <taxon>Plasmodium</taxon>
        <taxon>Plasmodium (Laverania)</taxon>
    </lineage>
</organism>
<protein>
    <recommendedName>
        <fullName evidence="8">Plasmepsin IV</fullName>
        <ecNumber evidence="5 7">3.4.23.39</ecNumber>
    </recommendedName>
    <alternativeName>
        <fullName evidence="9">Plasmepsin 4</fullName>
    </alternativeName>
</protein>
<keyword id="KW-0064">Aspartyl protease</keyword>
<keyword id="KW-1015">Disulfide bond</keyword>
<keyword id="KW-0378">Hydrolase</keyword>
<keyword id="KW-0472">Membrane</keyword>
<keyword id="KW-0645">Protease</keyword>
<keyword id="KW-1185">Reference proteome</keyword>
<keyword id="KW-0735">Signal-anchor</keyword>
<keyword id="KW-0812">Transmembrane</keyword>
<keyword id="KW-1133">Transmembrane helix</keyword>
<keyword id="KW-0926">Vacuole</keyword>
<keyword id="KW-0865">Zymogen</keyword>
<proteinExistence type="evidence at protein level"/>
<dbReference type="EC" id="3.4.23.39" evidence="5 7"/>
<dbReference type="EMBL" id="AY878737">
    <property type="protein sequence ID" value="AAW71461.1"/>
    <property type="molecule type" value="Genomic_DNA"/>
</dbReference>
<dbReference type="EMBL" id="AY878738">
    <property type="protein sequence ID" value="AAW71462.1"/>
    <property type="molecule type" value="Genomic_DNA"/>
</dbReference>
<dbReference type="EMBL" id="CH671923">
    <property type="protein sequence ID" value="KOB58715.1"/>
    <property type="status" value="ALT_SEQ"/>
    <property type="molecule type" value="Genomic_DNA"/>
</dbReference>
<dbReference type="SMR" id="Q17SB3"/>
<dbReference type="MEROPS" id="A01.059"/>
<dbReference type="EnsemblProtists" id="KOB58715">
    <property type="protein sequence ID" value="KOB58715"/>
    <property type="gene ID" value="PFHG_00463"/>
</dbReference>
<dbReference type="KEGG" id="pfh:PFHG_00463"/>
<dbReference type="VEuPathDB" id="PlasmoDB:PF3D7_1407800"/>
<dbReference type="VEuPathDB" id="PlasmoDB:Pf7G8-2_000483000"/>
<dbReference type="VEuPathDB" id="PlasmoDB:Pf7G8_140013200"/>
<dbReference type="VEuPathDB" id="PlasmoDB:PfCD01_140013500"/>
<dbReference type="VEuPathDB" id="PlasmoDB:PfDd2_140012400"/>
<dbReference type="VEuPathDB" id="PlasmoDB:PfGA01_140013500"/>
<dbReference type="VEuPathDB" id="PlasmoDB:PfGB4_140014000"/>
<dbReference type="VEuPathDB" id="PlasmoDB:PfGN01_140013100"/>
<dbReference type="VEuPathDB" id="PlasmoDB:PfHB3_140013700"/>
<dbReference type="VEuPathDB" id="PlasmoDB:PfIT_140014400"/>
<dbReference type="VEuPathDB" id="PlasmoDB:PfKE01_140013100"/>
<dbReference type="VEuPathDB" id="PlasmoDB:PfKH01_140013400"/>
<dbReference type="VEuPathDB" id="PlasmoDB:PfKH02_140013700"/>
<dbReference type="VEuPathDB" id="PlasmoDB:PfML01_140013300"/>
<dbReference type="VEuPathDB" id="PlasmoDB:PfNF135_140013300"/>
<dbReference type="VEuPathDB" id="PlasmoDB:PfNF166_140012000"/>
<dbReference type="VEuPathDB" id="PlasmoDB:PfNF54_140012800"/>
<dbReference type="VEuPathDB" id="PlasmoDB:PfSD01_140011300"/>
<dbReference type="VEuPathDB" id="PlasmoDB:PfSN01_140015200"/>
<dbReference type="VEuPathDB" id="PlasmoDB:PfTG01_140013200"/>
<dbReference type="OrthoDB" id="725at418107"/>
<dbReference type="Proteomes" id="UP000054289">
    <property type="component" value="Unassembled WGS sequence"/>
</dbReference>
<dbReference type="GO" id="GO:0020020">
    <property type="term" value="C:food vacuole"/>
    <property type="evidence" value="ECO:0000314"/>
    <property type="project" value="UniProtKB"/>
</dbReference>
<dbReference type="GO" id="GO:0016020">
    <property type="term" value="C:membrane"/>
    <property type="evidence" value="ECO:0007669"/>
    <property type="project" value="UniProtKB-SubCell"/>
</dbReference>
<dbReference type="GO" id="GO:0005775">
    <property type="term" value="C:vacuolar lumen"/>
    <property type="evidence" value="ECO:0007669"/>
    <property type="project" value="UniProtKB-SubCell"/>
</dbReference>
<dbReference type="GO" id="GO:0004190">
    <property type="term" value="F:aspartic-type endopeptidase activity"/>
    <property type="evidence" value="ECO:0000314"/>
    <property type="project" value="UniProtKB"/>
</dbReference>
<dbReference type="GO" id="GO:0044002">
    <property type="term" value="P:acquisition of nutrients from host"/>
    <property type="evidence" value="ECO:0000314"/>
    <property type="project" value="UniProtKB"/>
</dbReference>
<dbReference type="GO" id="GO:0006508">
    <property type="term" value="P:proteolysis"/>
    <property type="evidence" value="ECO:0007669"/>
    <property type="project" value="UniProtKB-KW"/>
</dbReference>
<dbReference type="CDD" id="cd05471">
    <property type="entry name" value="pepsin_like"/>
    <property type="match status" value="1"/>
</dbReference>
<dbReference type="FunFam" id="2.40.70.10:FF:000035">
    <property type="entry name" value="Plasmepsin-2"/>
    <property type="match status" value="1"/>
</dbReference>
<dbReference type="FunFam" id="2.40.70.10:FF:000038">
    <property type="entry name" value="Plasmepsin-2"/>
    <property type="match status" value="1"/>
</dbReference>
<dbReference type="Gene3D" id="2.40.70.10">
    <property type="entry name" value="Acid Proteases"/>
    <property type="match status" value="2"/>
</dbReference>
<dbReference type="InterPro" id="IPR001461">
    <property type="entry name" value="Aspartic_peptidase_A1"/>
</dbReference>
<dbReference type="InterPro" id="IPR001969">
    <property type="entry name" value="Aspartic_peptidase_AS"/>
</dbReference>
<dbReference type="InterPro" id="IPR034164">
    <property type="entry name" value="Pepsin-like_dom"/>
</dbReference>
<dbReference type="InterPro" id="IPR033121">
    <property type="entry name" value="PEPTIDASE_A1"/>
</dbReference>
<dbReference type="InterPro" id="IPR021109">
    <property type="entry name" value="Peptidase_aspartic_dom_sf"/>
</dbReference>
<dbReference type="PANTHER" id="PTHR47966">
    <property type="entry name" value="BETA-SITE APP-CLEAVING ENZYME, ISOFORM A-RELATED"/>
    <property type="match status" value="1"/>
</dbReference>
<dbReference type="PANTHER" id="PTHR47966:SF51">
    <property type="entry name" value="BETA-SITE APP-CLEAVING ENZYME, ISOFORM A-RELATED"/>
    <property type="match status" value="1"/>
</dbReference>
<dbReference type="Pfam" id="PF00026">
    <property type="entry name" value="Asp"/>
    <property type="match status" value="1"/>
</dbReference>
<dbReference type="PRINTS" id="PR00792">
    <property type="entry name" value="PEPSIN"/>
</dbReference>
<dbReference type="SUPFAM" id="SSF50630">
    <property type="entry name" value="Acid proteases"/>
    <property type="match status" value="1"/>
</dbReference>
<dbReference type="PROSITE" id="PS00141">
    <property type="entry name" value="ASP_PROTEASE"/>
    <property type="match status" value="2"/>
</dbReference>
<dbReference type="PROSITE" id="PS51767">
    <property type="entry name" value="PEPTIDASE_A1"/>
    <property type="match status" value="1"/>
</dbReference>
<name>PLM4_PLAFX</name>
<sequence>MALTVKEEEFSNTLIKNASAFDRLKLGNLKNLKIQKKLQFLYLILFVLITGVFFFFLIGNFYSHRKLYQVIKNTKHTTIGFKIDRPHDKVLSSVLKNKLSTYVKESFKFFKSGYAQKGYLGSENDSIELDDVANLMFYGEGQIGTNKQPFMFIFDTGSANLWVPSVNCDSIGCSTKHLYDASASKSYEKDGTKVEISYGSGTVRGYFSKDVISLGDLSLPYKFIEVTDADDLEPIYSGSEFDGILGLGWKDLSIGSIDPVVVELKKQNKIDNALFTFYLPVHDKHVGYLTIGGIESDFYEGPLTYEKLNHDLYWQIDLDIHFGKYVMQKANAVVDSGTSTITAPTSFLNKFFTDMNVIKVPFLPLYVTTCDNDDLPTLEFHSRNNKYTLEPEFYMDPLSDIDPALCMLYILPVDIDDNTFILGDPFMRKYFTVFDYEKESVGFAVAKNL</sequence>